<reference key="1">
    <citation type="journal article" date="2005" name="Nature">
        <title>The DNA sequence of the human X chromosome.</title>
        <authorList>
            <person name="Ross M.T."/>
            <person name="Grafham D.V."/>
            <person name="Coffey A.J."/>
            <person name="Scherer S."/>
            <person name="McLay K."/>
            <person name="Muzny D."/>
            <person name="Platzer M."/>
            <person name="Howell G.R."/>
            <person name="Burrows C."/>
            <person name="Bird C.P."/>
            <person name="Frankish A."/>
            <person name="Lovell F.L."/>
            <person name="Howe K.L."/>
            <person name="Ashurst J.L."/>
            <person name="Fulton R.S."/>
            <person name="Sudbrak R."/>
            <person name="Wen G."/>
            <person name="Jones M.C."/>
            <person name="Hurles M.E."/>
            <person name="Andrews T.D."/>
            <person name="Scott C.E."/>
            <person name="Searle S."/>
            <person name="Ramser J."/>
            <person name="Whittaker A."/>
            <person name="Deadman R."/>
            <person name="Carter N.P."/>
            <person name="Hunt S.E."/>
            <person name="Chen R."/>
            <person name="Cree A."/>
            <person name="Gunaratne P."/>
            <person name="Havlak P."/>
            <person name="Hodgson A."/>
            <person name="Metzker M.L."/>
            <person name="Richards S."/>
            <person name="Scott G."/>
            <person name="Steffen D."/>
            <person name="Sodergren E."/>
            <person name="Wheeler D.A."/>
            <person name="Worley K.C."/>
            <person name="Ainscough R."/>
            <person name="Ambrose K.D."/>
            <person name="Ansari-Lari M.A."/>
            <person name="Aradhya S."/>
            <person name="Ashwell R.I."/>
            <person name="Babbage A.K."/>
            <person name="Bagguley C.L."/>
            <person name="Ballabio A."/>
            <person name="Banerjee R."/>
            <person name="Barker G.E."/>
            <person name="Barlow K.F."/>
            <person name="Barrett I.P."/>
            <person name="Bates K.N."/>
            <person name="Beare D.M."/>
            <person name="Beasley H."/>
            <person name="Beasley O."/>
            <person name="Beck A."/>
            <person name="Bethel G."/>
            <person name="Blechschmidt K."/>
            <person name="Brady N."/>
            <person name="Bray-Allen S."/>
            <person name="Bridgeman A.M."/>
            <person name="Brown A.J."/>
            <person name="Brown M.J."/>
            <person name="Bonnin D."/>
            <person name="Bruford E.A."/>
            <person name="Buhay C."/>
            <person name="Burch P."/>
            <person name="Burford D."/>
            <person name="Burgess J."/>
            <person name="Burrill W."/>
            <person name="Burton J."/>
            <person name="Bye J.M."/>
            <person name="Carder C."/>
            <person name="Carrel L."/>
            <person name="Chako J."/>
            <person name="Chapman J.C."/>
            <person name="Chavez D."/>
            <person name="Chen E."/>
            <person name="Chen G."/>
            <person name="Chen Y."/>
            <person name="Chen Z."/>
            <person name="Chinault C."/>
            <person name="Ciccodicola A."/>
            <person name="Clark S.Y."/>
            <person name="Clarke G."/>
            <person name="Clee C.M."/>
            <person name="Clegg S."/>
            <person name="Clerc-Blankenburg K."/>
            <person name="Clifford K."/>
            <person name="Cobley V."/>
            <person name="Cole C.G."/>
            <person name="Conquer J.S."/>
            <person name="Corby N."/>
            <person name="Connor R.E."/>
            <person name="David R."/>
            <person name="Davies J."/>
            <person name="Davis C."/>
            <person name="Davis J."/>
            <person name="Delgado O."/>
            <person name="Deshazo D."/>
            <person name="Dhami P."/>
            <person name="Ding Y."/>
            <person name="Dinh H."/>
            <person name="Dodsworth S."/>
            <person name="Draper H."/>
            <person name="Dugan-Rocha S."/>
            <person name="Dunham A."/>
            <person name="Dunn M."/>
            <person name="Durbin K.J."/>
            <person name="Dutta I."/>
            <person name="Eades T."/>
            <person name="Ellwood M."/>
            <person name="Emery-Cohen A."/>
            <person name="Errington H."/>
            <person name="Evans K.L."/>
            <person name="Faulkner L."/>
            <person name="Francis F."/>
            <person name="Frankland J."/>
            <person name="Fraser A.E."/>
            <person name="Galgoczy P."/>
            <person name="Gilbert J."/>
            <person name="Gill R."/>
            <person name="Gloeckner G."/>
            <person name="Gregory S.G."/>
            <person name="Gribble S."/>
            <person name="Griffiths C."/>
            <person name="Grocock R."/>
            <person name="Gu Y."/>
            <person name="Gwilliam R."/>
            <person name="Hamilton C."/>
            <person name="Hart E.A."/>
            <person name="Hawes A."/>
            <person name="Heath P.D."/>
            <person name="Heitmann K."/>
            <person name="Hennig S."/>
            <person name="Hernandez J."/>
            <person name="Hinzmann B."/>
            <person name="Ho S."/>
            <person name="Hoffs M."/>
            <person name="Howden P.J."/>
            <person name="Huckle E.J."/>
            <person name="Hume J."/>
            <person name="Hunt P.J."/>
            <person name="Hunt A.R."/>
            <person name="Isherwood J."/>
            <person name="Jacob L."/>
            <person name="Johnson D."/>
            <person name="Jones S."/>
            <person name="de Jong P.J."/>
            <person name="Joseph S.S."/>
            <person name="Keenan S."/>
            <person name="Kelly S."/>
            <person name="Kershaw J.K."/>
            <person name="Khan Z."/>
            <person name="Kioschis P."/>
            <person name="Klages S."/>
            <person name="Knights A.J."/>
            <person name="Kosiura A."/>
            <person name="Kovar-Smith C."/>
            <person name="Laird G.K."/>
            <person name="Langford C."/>
            <person name="Lawlor S."/>
            <person name="Leversha M."/>
            <person name="Lewis L."/>
            <person name="Liu W."/>
            <person name="Lloyd C."/>
            <person name="Lloyd D.M."/>
            <person name="Loulseged H."/>
            <person name="Loveland J.E."/>
            <person name="Lovell J.D."/>
            <person name="Lozado R."/>
            <person name="Lu J."/>
            <person name="Lyne R."/>
            <person name="Ma J."/>
            <person name="Maheshwari M."/>
            <person name="Matthews L.H."/>
            <person name="McDowall J."/>
            <person name="McLaren S."/>
            <person name="McMurray A."/>
            <person name="Meidl P."/>
            <person name="Meitinger T."/>
            <person name="Milne S."/>
            <person name="Miner G."/>
            <person name="Mistry S.L."/>
            <person name="Morgan M."/>
            <person name="Morris S."/>
            <person name="Mueller I."/>
            <person name="Mullikin J.C."/>
            <person name="Nguyen N."/>
            <person name="Nordsiek G."/>
            <person name="Nyakatura G."/>
            <person name="O'dell C.N."/>
            <person name="Okwuonu G."/>
            <person name="Palmer S."/>
            <person name="Pandian R."/>
            <person name="Parker D."/>
            <person name="Parrish J."/>
            <person name="Pasternak S."/>
            <person name="Patel D."/>
            <person name="Pearce A.V."/>
            <person name="Pearson D.M."/>
            <person name="Pelan S.E."/>
            <person name="Perez L."/>
            <person name="Porter K.M."/>
            <person name="Ramsey Y."/>
            <person name="Reichwald K."/>
            <person name="Rhodes S."/>
            <person name="Ridler K.A."/>
            <person name="Schlessinger D."/>
            <person name="Schueler M.G."/>
            <person name="Sehra H.K."/>
            <person name="Shaw-Smith C."/>
            <person name="Shen H."/>
            <person name="Sheridan E.M."/>
            <person name="Shownkeen R."/>
            <person name="Skuce C.D."/>
            <person name="Smith M.L."/>
            <person name="Sotheran E.C."/>
            <person name="Steingruber H.E."/>
            <person name="Steward C.A."/>
            <person name="Storey R."/>
            <person name="Swann R.M."/>
            <person name="Swarbreck D."/>
            <person name="Tabor P.E."/>
            <person name="Taudien S."/>
            <person name="Taylor T."/>
            <person name="Teague B."/>
            <person name="Thomas K."/>
            <person name="Thorpe A."/>
            <person name="Timms K."/>
            <person name="Tracey A."/>
            <person name="Trevanion S."/>
            <person name="Tromans A.C."/>
            <person name="d'Urso M."/>
            <person name="Verduzco D."/>
            <person name="Villasana D."/>
            <person name="Waldron L."/>
            <person name="Wall M."/>
            <person name="Wang Q."/>
            <person name="Warren J."/>
            <person name="Warry G.L."/>
            <person name="Wei X."/>
            <person name="West A."/>
            <person name="Whitehead S.L."/>
            <person name="Whiteley M.N."/>
            <person name="Wilkinson J.E."/>
            <person name="Willey D.L."/>
            <person name="Williams G."/>
            <person name="Williams L."/>
            <person name="Williamson A."/>
            <person name="Williamson H."/>
            <person name="Wilming L."/>
            <person name="Woodmansey R.L."/>
            <person name="Wray P.W."/>
            <person name="Yen J."/>
            <person name="Zhang J."/>
            <person name="Zhou J."/>
            <person name="Zoghbi H."/>
            <person name="Zorilla S."/>
            <person name="Buck D."/>
            <person name="Reinhardt R."/>
            <person name="Poustka A."/>
            <person name="Rosenthal A."/>
            <person name="Lehrach H."/>
            <person name="Meindl A."/>
            <person name="Minx P.J."/>
            <person name="Hillier L.W."/>
            <person name="Willard H.F."/>
            <person name="Wilson R.K."/>
            <person name="Waterston R.H."/>
            <person name="Rice C.M."/>
            <person name="Vaudin M."/>
            <person name="Coulson A."/>
            <person name="Nelson D.L."/>
            <person name="Weinstock G."/>
            <person name="Sulston J.E."/>
            <person name="Durbin R.M."/>
            <person name="Hubbard T."/>
            <person name="Gibbs R.A."/>
            <person name="Beck S."/>
            <person name="Rogers J."/>
            <person name="Bentley D.R."/>
        </authorList>
    </citation>
    <scope>NUCLEOTIDE SEQUENCE [LARGE SCALE GENOMIC DNA]</scope>
</reference>
<accession>A0A0U1RRI6</accession>
<proteinExistence type="evidence at protein level"/>
<gene>
    <name evidence="4" type="primary">CENPVL3</name>
    <name evidence="4" type="synonym">CENPVP3</name>
</gene>
<comment type="cofactor">
    <cofactor evidence="1">
        <name>Zn(2+)</name>
        <dbReference type="ChEBI" id="CHEBI:29105"/>
    </cofactor>
    <text evidence="1">Binds 2 Zn(2+) ions per subunit.</text>
</comment>
<comment type="similarity">
    <text evidence="3">Belongs to the Gfa family.</text>
</comment>
<organism>
    <name type="scientific">Homo sapiens</name>
    <name type="common">Human</name>
    <dbReference type="NCBI Taxonomy" id="9606"/>
    <lineage>
        <taxon>Eukaryota</taxon>
        <taxon>Metazoa</taxon>
        <taxon>Chordata</taxon>
        <taxon>Craniata</taxon>
        <taxon>Vertebrata</taxon>
        <taxon>Euteleostomi</taxon>
        <taxon>Mammalia</taxon>
        <taxon>Eutheria</taxon>
        <taxon>Euarchontoglires</taxon>
        <taxon>Primates</taxon>
        <taxon>Haplorrhini</taxon>
        <taxon>Catarrhini</taxon>
        <taxon>Hominidae</taxon>
        <taxon>Homo</taxon>
    </lineage>
</organism>
<protein>
    <recommendedName>
        <fullName evidence="3">Centromere protein V-like protein 3</fullName>
    </recommendedName>
    <alternativeName>
        <fullName evidence="4">Centromere protein V pseudogene 3</fullName>
    </alternativeName>
</protein>
<dbReference type="EMBL" id="AC234030">
    <property type="status" value="NOT_ANNOTATED_CDS"/>
    <property type="molecule type" value="Genomic_DNA"/>
</dbReference>
<dbReference type="CCDS" id="CCDS87743.2"/>
<dbReference type="RefSeq" id="NP_001342205.2">
    <property type="nucleotide sequence ID" value="NM_001355276.2"/>
</dbReference>
<dbReference type="SMR" id="A0A0U1RRI6"/>
<dbReference type="BioMuta" id="CENPVL3"/>
<dbReference type="jPOST" id="A0A0U1RRI6"/>
<dbReference type="MassIVE" id="A0A0U1RRI6"/>
<dbReference type="PeptideAtlas" id="A0A0U1RRI6"/>
<dbReference type="Pumba" id="A0A0U1RRI6"/>
<dbReference type="Ensembl" id="ENST00000417339.4">
    <property type="protein sequence ID" value="ENSP00000489547.2"/>
    <property type="gene ID" value="ENSG00000224109.4"/>
</dbReference>
<dbReference type="GeneID" id="347549"/>
<dbReference type="MANE-Select" id="ENST00000417339.4">
    <property type="protein sequence ID" value="ENSP00000489547.2"/>
    <property type="RefSeq nucleotide sequence ID" value="NM_001355276.2"/>
    <property type="RefSeq protein sequence ID" value="NP_001342205.2"/>
</dbReference>
<dbReference type="AGR" id="HGNC:43880"/>
<dbReference type="GeneCards" id="CENPVL3"/>
<dbReference type="HGNC" id="HGNC:43880">
    <property type="gene designation" value="CENPVL3"/>
</dbReference>
<dbReference type="HPA" id="ENSG00000224109">
    <property type="expression patterns" value="Group enriched (brain, testis)"/>
</dbReference>
<dbReference type="neXtProt" id="NX_A0A0U1RRI6"/>
<dbReference type="VEuPathDB" id="HostDB:ENSG00000224109"/>
<dbReference type="GeneTree" id="ENSGT00390000003183"/>
<dbReference type="InParanoid" id="A0A0U1RRI6"/>
<dbReference type="OrthoDB" id="10015082at2759"/>
<dbReference type="PAN-GO" id="A0A0U1RRI6">
    <property type="GO annotations" value="0 GO annotations based on evolutionary models"/>
</dbReference>
<dbReference type="Pharos" id="A0A0U1RRI6">
    <property type="development level" value="Tdark"/>
</dbReference>
<dbReference type="PRO" id="PR:A0A0U1RRI6"/>
<dbReference type="Proteomes" id="UP000005640">
    <property type="component" value="Chromosome X"/>
</dbReference>
<dbReference type="RNAct" id="A0A0U1RRI6">
    <property type="molecule type" value="protein"/>
</dbReference>
<dbReference type="Bgee" id="ENSG00000224109">
    <property type="expression patterns" value="Expressed in ventricular zone and 40 other cell types or tissues"/>
</dbReference>
<dbReference type="GO" id="GO:0016846">
    <property type="term" value="F:carbon-sulfur lyase activity"/>
    <property type="evidence" value="ECO:0007669"/>
    <property type="project" value="InterPro"/>
</dbReference>
<dbReference type="GO" id="GO:0046872">
    <property type="term" value="F:metal ion binding"/>
    <property type="evidence" value="ECO:0007669"/>
    <property type="project" value="UniProtKB-KW"/>
</dbReference>
<dbReference type="Gene3D" id="2.170.150.70">
    <property type="match status" value="1"/>
</dbReference>
<dbReference type="InterPro" id="IPR052355">
    <property type="entry name" value="CENP-V-like"/>
</dbReference>
<dbReference type="InterPro" id="IPR006913">
    <property type="entry name" value="CENP-V/GFA"/>
</dbReference>
<dbReference type="InterPro" id="IPR011057">
    <property type="entry name" value="Mss4-like_sf"/>
</dbReference>
<dbReference type="PANTHER" id="PTHR28620">
    <property type="entry name" value="CENTROMERE PROTEIN V"/>
    <property type="match status" value="1"/>
</dbReference>
<dbReference type="PANTHER" id="PTHR28620:SF3">
    <property type="entry name" value="CENTROMERE PROTEIN V-LIKE PROTEIN 1"/>
    <property type="match status" value="1"/>
</dbReference>
<dbReference type="Pfam" id="PF04828">
    <property type="entry name" value="GFA"/>
    <property type="match status" value="1"/>
</dbReference>
<dbReference type="SUPFAM" id="SSF51316">
    <property type="entry name" value="Mss4-like"/>
    <property type="match status" value="1"/>
</dbReference>
<dbReference type="PROSITE" id="PS51891">
    <property type="entry name" value="CENP_V_GFA"/>
    <property type="match status" value="1"/>
</dbReference>
<keyword id="KW-0479">Metal-binding</keyword>
<keyword id="KW-1267">Proteomics identification</keyword>
<keyword id="KW-1185">Reference proteome</keyword>
<keyword id="KW-0862">Zinc</keyword>
<evidence type="ECO:0000255" key="1">
    <source>
        <dbReference type="PROSITE-ProRule" id="PRU01239"/>
    </source>
</evidence>
<evidence type="ECO:0000256" key="2">
    <source>
        <dbReference type="SAM" id="MobiDB-lite"/>
    </source>
</evidence>
<evidence type="ECO:0000305" key="3"/>
<evidence type="ECO:0000312" key="4">
    <source>
        <dbReference type="HGNC" id="HGNC:43880"/>
    </source>
</evidence>
<name>CENL3_HUMAN</name>
<sequence>MGRVRNRATAQRRRRKRPGDPPAACAAIAVMGASRAQCPRVQVGVGSHAAAKRWLGKLRRKRRWRRAREAGSRDPLPSAPLPDPPAPAESPKELDLGAQRERWETFRKLWGLSCEGAAKVLLDTFEYPGLVHHTGGCHCGAVRFAVWAPADLRVVDCSCRLCRKKQHRHFLVPASRFTLLQGAESIVTYRSNTHPALHSFCSRCGVQSFHAAVSDPRVYGVAPHCLDEGTVRSVVIEEVGGGDPGEEAAEEHKAIHKTSSQSAPACPREQEQ</sequence>
<feature type="chain" id="PRO_0000444699" description="Centromere protein V-like protein 3">
    <location>
        <begin position="1"/>
        <end position="272"/>
    </location>
</feature>
<feature type="domain" description="CENP-V/GFA" evidence="1">
    <location>
        <begin position="133"/>
        <end position="246"/>
    </location>
</feature>
<feature type="region of interest" description="Disordered" evidence="2">
    <location>
        <begin position="1"/>
        <end position="23"/>
    </location>
</feature>
<feature type="region of interest" description="Disordered" evidence="2">
    <location>
        <begin position="65"/>
        <end position="95"/>
    </location>
</feature>
<feature type="region of interest" description="Disordered" evidence="2">
    <location>
        <begin position="240"/>
        <end position="272"/>
    </location>
</feature>
<feature type="compositionally biased region" description="Basic residues" evidence="2">
    <location>
        <begin position="1"/>
        <end position="17"/>
    </location>
</feature>
<feature type="compositionally biased region" description="Pro residues" evidence="2">
    <location>
        <begin position="77"/>
        <end position="88"/>
    </location>
</feature>
<feature type="binding site" evidence="1">
    <location>
        <position position="137"/>
    </location>
    <ligand>
        <name>Zn(2+)</name>
        <dbReference type="ChEBI" id="CHEBI:29105"/>
        <label>1</label>
        <note>structural</note>
    </ligand>
</feature>
<feature type="binding site" evidence="1">
    <location>
        <position position="139"/>
    </location>
    <ligand>
        <name>Zn(2+)</name>
        <dbReference type="ChEBI" id="CHEBI:29105"/>
        <label>1</label>
        <note>structural</note>
    </ligand>
</feature>
<feature type="binding site" evidence="1">
    <location>
        <position position="157"/>
    </location>
    <ligand>
        <name>Zn(2+)</name>
        <dbReference type="ChEBI" id="CHEBI:29105"/>
        <label>2</label>
        <note>catalytic</note>
    </ligand>
</feature>
<feature type="binding site" evidence="1">
    <location>
        <position position="159"/>
    </location>
    <ligand>
        <name>Zn(2+)</name>
        <dbReference type="ChEBI" id="CHEBI:29105"/>
        <label>2</label>
        <note>catalytic</note>
    </ligand>
</feature>
<feature type="binding site" evidence="1">
    <location>
        <position position="162"/>
    </location>
    <ligand>
        <name>Zn(2+)</name>
        <dbReference type="ChEBI" id="CHEBI:29105"/>
        <label>2</label>
        <note>catalytic</note>
    </ligand>
</feature>
<feature type="binding site" evidence="1">
    <location>
        <position position="201"/>
    </location>
    <ligand>
        <name>Zn(2+)</name>
        <dbReference type="ChEBI" id="CHEBI:29105"/>
        <label>1</label>
        <note>structural</note>
    </ligand>
</feature>
<feature type="binding site" evidence="1">
    <location>
        <position position="204"/>
    </location>
    <ligand>
        <name>Zn(2+)</name>
        <dbReference type="ChEBI" id="CHEBI:29105"/>
        <label>1</label>
        <note>structural</note>
    </ligand>
</feature>